<comment type="subcellular location">
    <subcellularLocation>
        <location evidence="1">Cell inner membrane</location>
        <topology evidence="1">Multi-pass membrane protein</topology>
    </subcellularLocation>
</comment>
<comment type="similarity">
    <text evidence="3">To P.aeruginosa GlpM.</text>
</comment>
<evidence type="ECO:0000250" key="1"/>
<evidence type="ECO:0000255" key="2"/>
<evidence type="ECO:0000305" key="3"/>
<feature type="chain" id="PRO_0000168970" description="Inner membrane protein YdgC">
    <location>
        <begin position="1"/>
        <end position="111"/>
    </location>
</feature>
<feature type="topological domain" description="Cytoplasmic" evidence="2">
    <location>
        <begin position="1"/>
        <end position="26"/>
    </location>
</feature>
<feature type="transmembrane region" description="Helical" evidence="2">
    <location>
        <begin position="27"/>
        <end position="47"/>
    </location>
</feature>
<feature type="topological domain" description="Periplasmic" evidence="2">
    <location>
        <begin position="48"/>
        <end position="58"/>
    </location>
</feature>
<feature type="transmembrane region" description="Helical" evidence="2">
    <location>
        <begin position="59"/>
        <end position="79"/>
    </location>
</feature>
<feature type="topological domain" description="Cytoplasmic" evidence="2">
    <location>
        <begin position="80"/>
        <end position="87"/>
    </location>
</feature>
<feature type="transmembrane region" description="Helical" evidence="2">
    <location>
        <begin position="88"/>
        <end position="108"/>
    </location>
</feature>
<feature type="topological domain" description="Periplasmic" evidence="2">
    <location>
        <begin position="109"/>
        <end position="111"/>
    </location>
</feature>
<gene>
    <name type="primary">ydgC</name>
    <name type="ordered locus">Z2608</name>
    <name type="ordered locus">ECs2313</name>
</gene>
<dbReference type="EMBL" id="AE005174">
    <property type="protein sequence ID" value="AAG56594.1"/>
    <property type="molecule type" value="Genomic_DNA"/>
</dbReference>
<dbReference type="EMBL" id="BA000007">
    <property type="protein sequence ID" value="BAB35736.1"/>
    <property type="molecule type" value="Genomic_DNA"/>
</dbReference>
<dbReference type="PIR" id="A90918">
    <property type="entry name" value="A90918"/>
</dbReference>
<dbReference type="PIR" id="F85766">
    <property type="entry name" value="F85766"/>
</dbReference>
<dbReference type="RefSeq" id="NP_310340.1">
    <property type="nucleotide sequence ID" value="NC_002695.1"/>
</dbReference>
<dbReference type="RefSeq" id="WP_000524868.1">
    <property type="nucleotide sequence ID" value="NZ_VOAI01000007.1"/>
</dbReference>
<dbReference type="STRING" id="155864.Z2608"/>
<dbReference type="GeneID" id="912634"/>
<dbReference type="KEGG" id="ece:Z2608"/>
<dbReference type="KEGG" id="ecs:ECs_2313"/>
<dbReference type="PATRIC" id="fig|386585.9.peg.2423"/>
<dbReference type="eggNOG" id="COG3136">
    <property type="taxonomic scope" value="Bacteria"/>
</dbReference>
<dbReference type="HOGENOM" id="CLU_140962_0_0_6"/>
<dbReference type="OMA" id="YFVYLAT"/>
<dbReference type="Proteomes" id="UP000000558">
    <property type="component" value="Chromosome"/>
</dbReference>
<dbReference type="Proteomes" id="UP000002519">
    <property type="component" value="Chromosome"/>
</dbReference>
<dbReference type="GO" id="GO:0005886">
    <property type="term" value="C:plasma membrane"/>
    <property type="evidence" value="ECO:0007669"/>
    <property type="project" value="UniProtKB-SubCell"/>
</dbReference>
<dbReference type="InterPro" id="IPR009707">
    <property type="entry name" value="GlpM/YdgC"/>
</dbReference>
<dbReference type="Pfam" id="PF06942">
    <property type="entry name" value="GlpM"/>
    <property type="match status" value="1"/>
</dbReference>
<name>YDGC_ECO57</name>
<proteinExistence type="inferred from homology"/>
<reference key="1">
    <citation type="journal article" date="2001" name="Nature">
        <title>Genome sequence of enterohaemorrhagic Escherichia coli O157:H7.</title>
        <authorList>
            <person name="Perna N.T."/>
            <person name="Plunkett G. III"/>
            <person name="Burland V."/>
            <person name="Mau B."/>
            <person name="Glasner J.D."/>
            <person name="Rose D.J."/>
            <person name="Mayhew G.F."/>
            <person name="Evans P.S."/>
            <person name="Gregor J."/>
            <person name="Kirkpatrick H.A."/>
            <person name="Posfai G."/>
            <person name="Hackett J."/>
            <person name="Klink S."/>
            <person name="Boutin A."/>
            <person name="Shao Y."/>
            <person name="Miller L."/>
            <person name="Grotbeck E.J."/>
            <person name="Davis N.W."/>
            <person name="Lim A."/>
            <person name="Dimalanta E.T."/>
            <person name="Potamousis K."/>
            <person name="Apodaca J."/>
            <person name="Anantharaman T.S."/>
            <person name="Lin J."/>
            <person name="Yen G."/>
            <person name="Schwartz D.C."/>
            <person name="Welch R.A."/>
            <person name="Blattner F.R."/>
        </authorList>
    </citation>
    <scope>NUCLEOTIDE SEQUENCE [LARGE SCALE GENOMIC DNA]</scope>
    <source>
        <strain>O157:H7 / EDL933 / ATCC 700927 / EHEC</strain>
    </source>
</reference>
<reference key="2">
    <citation type="journal article" date="2001" name="DNA Res.">
        <title>Complete genome sequence of enterohemorrhagic Escherichia coli O157:H7 and genomic comparison with a laboratory strain K-12.</title>
        <authorList>
            <person name="Hayashi T."/>
            <person name="Makino K."/>
            <person name="Ohnishi M."/>
            <person name="Kurokawa K."/>
            <person name="Ishii K."/>
            <person name="Yokoyama K."/>
            <person name="Han C.-G."/>
            <person name="Ohtsubo E."/>
            <person name="Nakayama K."/>
            <person name="Murata T."/>
            <person name="Tanaka M."/>
            <person name="Tobe T."/>
            <person name="Iida T."/>
            <person name="Takami H."/>
            <person name="Honda T."/>
            <person name="Sasakawa C."/>
            <person name="Ogasawara N."/>
            <person name="Yasunaga T."/>
            <person name="Kuhara S."/>
            <person name="Shiba T."/>
            <person name="Hattori M."/>
            <person name="Shinagawa H."/>
        </authorList>
    </citation>
    <scope>NUCLEOTIDE SEQUENCE [LARGE SCALE GENOMIC DNA]</scope>
    <source>
        <strain>O157:H7 / Sakai / RIMD 0509952 / EHEC</strain>
    </source>
</reference>
<accession>P0ACX1</accession>
<accession>P52110</accession>
<accession>P77466</accession>
<organism>
    <name type="scientific">Escherichia coli O157:H7</name>
    <dbReference type="NCBI Taxonomy" id="83334"/>
    <lineage>
        <taxon>Bacteria</taxon>
        <taxon>Pseudomonadati</taxon>
        <taxon>Pseudomonadota</taxon>
        <taxon>Gammaproteobacteria</taxon>
        <taxon>Enterobacterales</taxon>
        <taxon>Enterobacteriaceae</taxon>
        <taxon>Escherichia</taxon>
    </lineage>
</organism>
<protein>
    <recommendedName>
        <fullName>Inner membrane protein YdgC</fullName>
    </recommendedName>
</protein>
<sequence length="111" mass="12323">MGLVIKAALGALVVLLIGVLAKTKNYYIAGLIPLFPTFALIAHYIVASERGIEALRATIIFSMWSIIPYFVYLVSLWYFTGMMRLPAAFVGSVACWGISAWVLIICWIKLH</sequence>
<keyword id="KW-0997">Cell inner membrane</keyword>
<keyword id="KW-1003">Cell membrane</keyword>
<keyword id="KW-0472">Membrane</keyword>
<keyword id="KW-1185">Reference proteome</keyword>
<keyword id="KW-0812">Transmembrane</keyword>
<keyword id="KW-1133">Transmembrane helix</keyword>